<keyword id="KW-0963">Cytoplasm</keyword>
<keyword id="KW-0444">Lipid biosynthesis</keyword>
<keyword id="KW-0443">Lipid metabolism</keyword>
<keyword id="KW-0594">Phospholipid biosynthesis</keyword>
<keyword id="KW-1208">Phospholipid metabolism</keyword>
<keyword id="KW-0808">Transferase</keyword>
<organism>
    <name type="scientific">Nitratidesulfovibrio vulgaris (strain DP4)</name>
    <name type="common">Desulfovibrio vulgaris</name>
    <dbReference type="NCBI Taxonomy" id="391774"/>
    <lineage>
        <taxon>Bacteria</taxon>
        <taxon>Pseudomonadati</taxon>
        <taxon>Thermodesulfobacteriota</taxon>
        <taxon>Desulfovibrionia</taxon>
        <taxon>Desulfovibrionales</taxon>
        <taxon>Desulfovibrionaceae</taxon>
        <taxon>Nitratidesulfovibrio</taxon>
    </lineage>
</organism>
<proteinExistence type="inferred from homology"/>
<evidence type="ECO:0000255" key="1">
    <source>
        <dbReference type="HAMAP-Rule" id="MF_00019"/>
    </source>
</evidence>
<protein>
    <recommendedName>
        <fullName evidence="1">Phosphate acyltransferase</fullName>
        <ecNumber evidence="1">2.3.1.274</ecNumber>
    </recommendedName>
    <alternativeName>
        <fullName evidence="1">Acyl-ACP phosphotransacylase</fullName>
    </alternativeName>
    <alternativeName>
        <fullName evidence="1">Acyl-[acyl-carrier-protein]--phosphate acyltransferase</fullName>
    </alternativeName>
    <alternativeName>
        <fullName evidence="1">Phosphate-acyl-ACP acyltransferase</fullName>
    </alternativeName>
</protein>
<sequence length="345" mass="36895">MNSTIIAVDAMGGDFGPSVVVPGAVDAARERGLKVLLVGDRQKVEEELARIPLDGVEVEVVHASEVAGMDEKPSDILRRKKDASIQVVCRLVRDGHAHGIVSAGHSGASVACGMFIMGRVPGVERPALASVMPTEKQPIVLLDVGANVDCKPHHLFQFGLMANAFARDLLGYETPRIGLLSIGEEEGKGNTLVKEAYELFKLAQNINFVGNVEGRDLFTGEVDVVVCDGFVGNVALKLSEGLSSSMSRVLKRELLSGFLPKLGTLLARSAFKRFARVVDYAEYGGAPLLGLQSIAIVCHGKSNAKAIKSAVNMAATFVEKKTNERVVQAICANEELTRYGKAVRQ</sequence>
<comment type="function">
    <text evidence="1">Catalyzes the reversible formation of acyl-phosphate (acyl-PO(4)) from acyl-[acyl-carrier-protein] (acyl-ACP). This enzyme utilizes acyl-ACP as fatty acyl donor, but not acyl-CoA.</text>
</comment>
<comment type="catalytic activity">
    <reaction evidence="1">
        <text>a fatty acyl-[ACP] + phosphate = an acyl phosphate + holo-[ACP]</text>
        <dbReference type="Rhea" id="RHEA:42292"/>
        <dbReference type="Rhea" id="RHEA-COMP:9685"/>
        <dbReference type="Rhea" id="RHEA-COMP:14125"/>
        <dbReference type="ChEBI" id="CHEBI:43474"/>
        <dbReference type="ChEBI" id="CHEBI:59918"/>
        <dbReference type="ChEBI" id="CHEBI:64479"/>
        <dbReference type="ChEBI" id="CHEBI:138651"/>
        <dbReference type="EC" id="2.3.1.274"/>
    </reaction>
</comment>
<comment type="pathway">
    <text evidence="1">Lipid metabolism; phospholipid metabolism.</text>
</comment>
<comment type="subunit">
    <text evidence="1">Homodimer. Probably interacts with PlsY.</text>
</comment>
<comment type="subcellular location">
    <subcellularLocation>
        <location evidence="1">Cytoplasm</location>
    </subcellularLocation>
    <text evidence="1">Associated with the membrane possibly through PlsY.</text>
</comment>
<comment type="similarity">
    <text evidence="1">Belongs to the PlsX family.</text>
</comment>
<accession>A1VEK0</accession>
<dbReference type="EC" id="2.3.1.274" evidence="1"/>
<dbReference type="EMBL" id="CP000527">
    <property type="protein sequence ID" value="ABM28866.1"/>
    <property type="molecule type" value="Genomic_DNA"/>
</dbReference>
<dbReference type="RefSeq" id="WP_010938504.1">
    <property type="nucleotide sequence ID" value="NC_008751.1"/>
</dbReference>
<dbReference type="SMR" id="A1VEK0"/>
<dbReference type="KEGG" id="dvl:Dvul_1849"/>
<dbReference type="HOGENOM" id="CLU_039379_1_1_7"/>
<dbReference type="UniPathway" id="UPA00085"/>
<dbReference type="Proteomes" id="UP000009173">
    <property type="component" value="Chromosome"/>
</dbReference>
<dbReference type="GO" id="GO:0005737">
    <property type="term" value="C:cytoplasm"/>
    <property type="evidence" value="ECO:0007669"/>
    <property type="project" value="UniProtKB-SubCell"/>
</dbReference>
<dbReference type="GO" id="GO:0043811">
    <property type="term" value="F:phosphate:acyl-[acyl carrier protein] acyltransferase activity"/>
    <property type="evidence" value="ECO:0007669"/>
    <property type="project" value="UniProtKB-UniRule"/>
</dbReference>
<dbReference type="GO" id="GO:0006633">
    <property type="term" value="P:fatty acid biosynthetic process"/>
    <property type="evidence" value="ECO:0007669"/>
    <property type="project" value="UniProtKB-UniRule"/>
</dbReference>
<dbReference type="GO" id="GO:0008654">
    <property type="term" value="P:phospholipid biosynthetic process"/>
    <property type="evidence" value="ECO:0007669"/>
    <property type="project" value="UniProtKB-KW"/>
</dbReference>
<dbReference type="Gene3D" id="3.40.718.10">
    <property type="entry name" value="Isopropylmalate Dehydrogenase"/>
    <property type="match status" value="1"/>
</dbReference>
<dbReference type="HAMAP" id="MF_00019">
    <property type="entry name" value="PlsX"/>
    <property type="match status" value="1"/>
</dbReference>
<dbReference type="InterPro" id="IPR003664">
    <property type="entry name" value="FA_synthesis"/>
</dbReference>
<dbReference type="InterPro" id="IPR012281">
    <property type="entry name" value="Phospholipid_synth_PlsX-like"/>
</dbReference>
<dbReference type="NCBIfam" id="TIGR00182">
    <property type="entry name" value="plsX"/>
    <property type="match status" value="1"/>
</dbReference>
<dbReference type="PANTHER" id="PTHR30100">
    <property type="entry name" value="FATTY ACID/PHOSPHOLIPID SYNTHESIS PROTEIN PLSX"/>
    <property type="match status" value="1"/>
</dbReference>
<dbReference type="PANTHER" id="PTHR30100:SF1">
    <property type="entry name" value="PHOSPHATE ACYLTRANSFERASE"/>
    <property type="match status" value="1"/>
</dbReference>
<dbReference type="Pfam" id="PF02504">
    <property type="entry name" value="FA_synthesis"/>
    <property type="match status" value="1"/>
</dbReference>
<dbReference type="PIRSF" id="PIRSF002465">
    <property type="entry name" value="Phsphlp_syn_PlsX"/>
    <property type="match status" value="1"/>
</dbReference>
<dbReference type="SUPFAM" id="SSF53659">
    <property type="entry name" value="Isocitrate/Isopropylmalate dehydrogenase-like"/>
    <property type="match status" value="1"/>
</dbReference>
<gene>
    <name evidence="1" type="primary">plsX</name>
    <name type="ordered locus">Dvul_1849</name>
</gene>
<feature type="chain" id="PRO_1000001754" description="Phosphate acyltransferase">
    <location>
        <begin position="1"/>
        <end position="345"/>
    </location>
</feature>
<reference key="1">
    <citation type="journal article" date="2009" name="Environ. Microbiol.">
        <title>Contribution of mobile genetic elements to Desulfovibrio vulgaris genome plasticity.</title>
        <authorList>
            <person name="Walker C.B."/>
            <person name="Stolyar S."/>
            <person name="Chivian D."/>
            <person name="Pinel N."/>
            <person name="Gabster J.A."/>
            <person name="Dehal P.S."/>
            <person name="He Z."/>
            <person name="Yang Z.K."/>
            <person name="Yen H.C."/>
            <person name="Zhou J."/>
            <person name="Wall J.D."/>
            <person name="Hazen T.C."/>
            <person name="Arkin A.P."/>
            <person name="Stahl D.A."/>
        </authorList>
    </citation>
    <scope>NUCLEOTIDE SEQUENCE [LARGE SCALE GENOMIC DNA]</scope>
    <source>
        <strain>DP4</strain>
    </source>
</reference>
<name>PLSX_NITV4</name>